<reference key="1">
    <citation type="journal article" date="2008" name="J. Bacteriol.">
        <title>Genome sequence of the chemolithoautotrophic bacterium Oligotropha carboxidovorans OM5T.</title>
        <authorList>
            <person name="Paul D."/>
            <person name="Bridges S."/>
            <person name="Burgess S.C."/>
            <person name="Dandass Y."/>
            <person name="Lawrence M.L."/>
        </authorList>
    </citation>
    <scope>NUCLEOTIDE SEQUENCE [LARGE SCALE GENOMIC DNA]</scope>
    <source>
        <strain>ATCC 49405 / DSM 1227 / KCTC 32145 / OM5</strain>
    </source>
</reference>
<reference key="2">
    <citation type="journal article" date="2011" name="J. Bacteriol.">
        <title>Complete genome sequences of the chemolithoautotrophic Oligotropha carboxidovorans strains OM4 and OM5.</title>
        <authorList>
            <person name="Volland S."/>
            <person name="Rachinger M."/>
            <person name="Strittmatter A."/>
            <person name="Daniel R."/>
            <person name="Gottschalk G."/>
            <person name="Meyer O."/>
        </authorList>
    </citation>
    <scope>NUCLEOTIDE SEQUENCE [LARGE SCALE GENOMIC DNA]</scope>
    <source>
        <strain>ATCC 49405 / DSM 1227 / KCTC 32145 / OM5</strain>
    </source>
</reference>
<proteinExistence type="inferred from homology"/>
<evidence type="ECO:0000255" key="1">
    <source>
        <dbReference type="HAMAP-Rule" id="MF_00211"/>
    </source>
</evidence>
<name>TRPD_AFIC5</name>
<feature type="chain" id="PRO_1000099826" description="Anthranilate phosphoribosyltransferase">
    <location>
        <begin position="1"/>
        <end position="337"/>
    </location>
</feature>
<feature type="binding site" evidence="1">
    <location>
        <position position="81"/>
    </location>
    <ligand>
        <name>5-phospho-alpha-D-ribose 1-diphosphate</name>
        <dbReference type="ChEBI" id="CHEBI:58017"/>
    </ligand>
</feature>
<feature type="binding site" evidence="1">
    <location>
        <position position="81"/>
    </location>
    <ligand>
        <name>anthranilate</name>
        <dbReference type="ChEBI" id="CHEBI:16567"/>
        <label>1</label>
    </ligand>
</feature>
<feature type="binding site" evidence="1">
    <location>
        <begin position="84"/>
        <end position="85"/>
    </location>
    <ligand>
        <name>5-phospho-alpha-D-ribose 1-diphosphate</name>
        <dbReference type="ChEBI" id="CHEBI:58017"/>
    </ligand>
</feature>
<feature type="binding site" evidence="1">
    <location>
        <position position="89"/>
    </location>
    <ligand>
        <name>5-phospho-alpha-D-ribose 1-diphosphate</name>
        <dbReference type="ChEBI" id="CHEBI:58017"/>
    </ligand>
</feature>
<feature type="binding site" evidence="1">
    <location>
        <begin position="91"/>
        <end position="94"/>
    </location>
    <ligand>
        <name>5-phospho-alpha-D-ribose 1-diphosphate</name>
        <dbReference type="ChEBI" id="CHEBI:58017"/>
    </ligand>
</feature>
<feature type="binding site" evidence="1">
    <location>
        <position position="93"/>
    </location>
    <ligand>
        <name>Mg(2+)</name>
        <dbReference type="ChEBI" id="CHEBI:18420"/>
        <label>1</label>
    </ligand>
</feature>
<feature type="binding site" evidence="1">
    <location>
        <begin position="109"/>
        <end position="117"/>
    </location>
    <ligand>
        <name>5-phospho-alpha-D-ribose 1-diphosphate</name>
        <dbReference type="ChEBI" id="CHEBI:58017"/>
    </ligand>
</feature>
<feature type="binding site" evidence="1">
    <location>
        <position position="112"/>
    </location>
    <ligand>
        <name>anthranilate</name>
        <dbReference type="ChEBI" id="CHEBI:16567"/>
        <label>1</label>
    </ligand>
</feature>
<feature type="binding site" evidence="1">
    <location>
        <position position="121"/>
    </location>
    <ligand>
        <name>5-phospho-alpha-D-ribose 1-diphosphate</name>
        <dbReference type="ChEBI" id="CHEBI:58017"/>
    </ligand>
</feature>
<feature type="binding site" evidence="1">
    <location>
        <position position="167"/>
    </location>
    <ligand>
        <name>anthranilate</name>
        <dbReference type="ChEBI" id="CHEBI:16567"/>
        <label>2</label>
    </ligand>
</feature>
<feature type="binding site" evidence="1">
    <location>
        <position position="226"/>
    </location>
    <ligand>
        <name>Mg(2+)</name>
        <dbReference type="ChEBI" id="CHEBI:18420"/>
        <label>2</label>
    </ligand>
</feature>
<feature type="binding site" evidence="1">
    <location>
        <position position="227"/>
    </location>
    <ligand>
        <name>Mg(2+)</name>
        <dbReference type="ChEBI" id="CHEBI:18420"/>
        <label>1</label>
    </ligand>
</feature>
<feature type="binding site" evidence="1">
    <location>
        <position position="227"/>
    </location>
    <ligand>
        <name>Mg(2+)</name>
        <dbReference type="ChEBI" id="CHEBI:18420"/>
        <label>2</label>
    </ligand>
</feature>
<organism>
    <name type="scientific">Afipia carboxidovorans (strain ATCC 49405 / DSM 1227 / KCTC 32145 / OM5)</name>
    <name type="common">Oligotropha carboxidovorans</name>
    <dbReference type="NCBI Taxonomy" id="504832"/>
    <lineage>
        <taxon>Bacteria</taxon>
        <taxon>Pseudomonadati</taxon>
        <taxon>Pseudomonadota</taxon>
        <taxon>Alphaproteobacteria</taxon>
        <taxon>Hyphomicrobiales</taxon>
        <taxon>Nitrobacteraceae</taxon>
        <taxon>Afipia</taxon>
    </lineage>
</organism>
<protein>
    <recommendedName>
        <fullName evidence="1">Anthranilate phosphoribosyltransferase</fullName>
        <ecNumber evidence="1">2.4.2.18</ecNumber>
    </recommendedName>
</protein>
<sequence>MSDFKAILAKLADGKSLSRDEAVAAFDHLMSGEATPSQIGGALMAMRVRGETVDEITGAVSTMRAKMLRVTAPDDAVDVVGTGGDGSGSVNVSTCAAFIVAGAGVPVAKHGNRAMSSKSGAADVLASLGVNIELTPEQVGACIAKAGIGFMFAPAHHPAIRHVGPTRKELGTRTIFNLLGPLSNPAGVKRQMIGVFAKHWVEPVAQVLKNLGATAAWVVHGSDGLDEITLTGPTYVTELANGVTRSFTVTPEDGGLATVANADLRGGDATANAAALAAVLNGVKNDYRDVALLNAGAALVVAGKAHDLKEGVALGIKSLDSGAAADKLAQLVAVSRA</sequence>
<gene>
    <name evidence="1" type="primary">trpD</name>
    <name type="ordered locus">OCAR_6304</name>
    <name type="ordered locus">OCA5_c17300</name>
</gene>
<accession>B6JG28</accession>
<accession>F8BRR4</accession>
<dbReference type="EC" id="2.4.2.18" evidence="1"/>
<dbReference type="EMBL" id="CP001196">
    <property type="protein sequence ID" value="ACI93417.1"/>
    <property type="molecule type" value="Genomic_DNA"/>
</dbReference>
<dbReference type="EMBL" id="CP002826">
    <property type="protein sequence ID" value="AEI06444.1"/>
    <property type="molecule type" value="Genomic_DNA"/>
</dbReference>
<dbReference type="RefSeq" id="WP_012563443.1">
    <property type="nucleotide sequence ID" value="NC_015684.1"/>
</dbReference>
<dbReference type="SMR" id="B6JG28"/>
<dbReference type="STRING" id="504832.OCA5_c17300"/>
<dbReference type="KEGG" id="oca:OCAR_6304"/>
<dbReference type="KEGG" id="ocg:OCA5_c17300"/>
<dbReference type="PATRIC" id="fig|504832.7.peg.1852"/>
<dbReference type="eggNOG" id="COG0547">
    <property type="taxonomic scope" value="Bacteria"/>
</dbReference>
<dbReference type="HOGENOM" id="CLU_034315_2_1_5"/>
<dbReference type="OrthoDB" id="9806430at2"/>
<dbReference type="UniPathway" id="UPA00035">
    <property type="reaction ID" value="UER00041"/>
</dbReference>
<dbReference type="Proteomes" id="UP000007730">
    <property type="component" value="Chromosome"/>
</dbReference>
<dbReference type="GO" id="GO:0005829">
    <property type="term" value="C:cytosol"/>
    <property type="evidence" value="ECO:0007669"/>
    <property type="project" value="TreeGrafter"/>
</dbReference>
<dbReference type="GO" id="GO:0004048">
    <property type="term" value="F:anthranilate phosphoribosyltransferase activity"/>
    <property type="evidence" value="ECO:0007669"/>
    <property type="project" value="UniProtKB-UniRule"/>
</dbReference>
<dbReference type="GO" id="GO:0000287">
    <property type="term" value="F:magnesium ion binding"/>
    <property type="evidence" value="ECO:0007669"/>
    <property type="project" value="UniProtKB-UniRule"/>
</dbReference>
<dbReference type="GO" id="GO:0000162">
    <property type="term" value="P:L-tryptophan biosynthetic process"/>
    <property type="evidence" value="ECO:0007669"/>
    <property type="project" value="UniProtKB-UniRule"/>
</dbReference>
<dbReference type="FunFam" id="3.40.1030.10:FF:000002">
    <property type="entry name" value="Anthranilate phosphoribosyltransferase"/>
    <property type="match status" value="1"/>
</dbReference>
<dbReference type="Gene3D" id="3.40.1030.10">
    <property type="entry name" value="Nucleoside phosphorylase/phosphoribosyltransferase catalytic domain"/>
    <property type="match status" value="1"/>
</dbReference>
<dbReference type="Gene3D" id="1.20.970.10">
    <property type="entry name" value="Transferase, Pyrimidine Nucleoside Phosphorylase, Chain C"/>
    <property type="match status" value="1"/>
</dbReference>
<dbReference type="HAMAP" id="MF_00211">
    <property type="entry name" value="TrpD"/>
    <property type="match status" value="1"/>
</dbReference>
<dbReference type="InterPro" id="IPR005940">
    <property type="entry name" value="Anthranilate_Pribosyl_Tfrase"/>
</dbReference>
<dbReference type="InterPro" id="IPR000312">
    <property type="entry name" value="Glycosyl_Trfase_fam3"/>
</dbReference>
<dbReference type="InterPro" id="IPR017459">
    <property type="entry name" value="Glycosyl_Trfase_fam3_N_dom"/>
</dbReference>
<dbReference type="InterPro" id="IPR036320">
    <property type="entry name" value="Glycosyl_Trfase_fam3_N_dom_sf"/>
</dbReference>
<dbReference type="InterPro" id="IPR035902">
    <property type="entry name" value="Nuc_phospho_transferase"/>
</dbReference>
<dbReference type="NCBIfam" id="TIGR01245">
    <property type="entry name" value="trpD"/>
    <property type="match status" value="1"/>
</dbReference>
<dbReference type="PANTHER" id="PTHR43285">
    <property type="entry name" value="ANTHRANILATE PHOSPHORIBOSYLTRANSFERASE"/>
    <property type="match status" value="1"/>
</dbReference>
<dbReference type="PANTHER" id="PTHR43285:SF2">
    <property type="entry name" value="ANTHRANILATE PHOSPHORIBOSYLTRANSFERASE"/>
    <property type="match status" value="1"/>
</dbReference>
<dbReference type="Pfam" id="PF02885">
    <property type="entry name" value="Glycos_trans_3N"/>
    <property type="match status" value="1"/>
</dbReference>
<dbReference type="Pfam" id="PF00591">
    <property type="entry name" value="Glycos_transf_3"/>
    <property type="match status" value="1"/>
</dbReference>
<dbReference type="SUPFAM" id="SSF52418">
    <property type="entry name" value="Nucleoside phosphorylase/phosphoribosyltransferase catalytic domain"/>
    <property type="match status" value="1"/>
</dbReference>
<dbReference type="SUPFAM" id="SSF47648">
    <property type="entry name" value="Nucleoside phosphorylase/phosphoribosyltransferase N-terminal domain"/>
    <property type="match status" value="1"/>
</dbReference>
<keyword id="KW-0028">Amino-acid biosynthesis</keyword>
<keyword id="KW-0057">Aromatic amino acid biosynthesis</keyword>
<keyword id="KW-0328">Glycosyltransferase</keyword>
<keyword id="KW-0460">Magnesium</keyword>
<keyword id="KW-0479">Metal-binding</keyword>
<keyword id="KW-1185">Reference proteome</keyword>
<keyword id="KW-0808">Transferase</keyword>
<keyword id="KW-0822">Tryptophan biosynthesis</keyword>
<comment type="function">
    <text evidence="1">Catalyzes the transfer of the phosphoribosyl group of 5-phosphorylribose-1-pyrophosphate (PRPP) to anthranilate to yield N-(5'-phosphoribosyl)-anthranilate (PRA).</text>
</comment>
<comment type="catalytic activity">
    <reaction evidence="1">
        <text>N-(5-phospho-beta-D-ribosyl)anthranilate + diphosphate = 5-phospho-alpha-D-ribose 1-diphosphate + anthranilate</text>
        <dbReference type="Rhea" id="RHEA:11768"/>
        <dbReference type="ChEBI" id="CHEBI:16567"/>
        <dbReference type="ChEBI" id="CHEBI:18277"/>
        <dbReference type="ChEBI" id="CHEBI:33019"/>
        <dbReference type="ChEBI" id="CHEBI:58017"/>
        <dbReference type="EC" id="2.4.2.18"/>
    </reaction>
</comment>
<comment type="cofactor">
    <cofactor evidence="1">
        <name>Mg(2+)</name>
        <dbReference type="ChEBI" id="CHEBI:18420"/>
    </cofactor>
    <text evidence="1">Binds 2 magnesium ions per monomer.</text>
</comment>
<comment type="pathway">
    <text evidence="1">Amino-acid biosynthesis; L-tryptophan biosynthesis; L-tryptophan from chorismate: step 2/5.</text>
</comment>
<comment type="subunit">
    <text evidence="1">Homodimer.</text>
</comment>
<comment type="similarity">
    <text evidence="1">Belongs to the anthranilate phosphoribosyltransferase family.</text>
</comment>